<dbReference type="EMBL" id="X15538">
    <property type="protein sequence ID" value="CAA33545.1"/>
    <property type="molecule type" value="mRNA"/>
</dbReference>
<dbReference type="PIR" id="JH0501">
    <property type="entry name" value="JH0501"/>
</dbReference>
<dbReference type="SMR" id="P30373"/>
<dbReference type="STRING" id="9031.ENSGALP00000042881"/>
<dbReference type="PaxDb" id="9031-ENSGALP00000042881"/>
<dbReference type="VEuPathDB" id="HostDB:geneid_396247"/>
<dbReference type="eggNOG" id="KOG1721">
    <property type="taxonomic scope" value="Eukaryota"/>
</dbReference>
<dbReference type="InParanoid" id="P30373"/>
<dbReference type="PhylomeDB" id="P30373"/>
<dbReference type="PRO" id="PR:P30373"/>
<dbReference type="Proteomes" id="UP000000539">
    <property type="component" value="Unassembled WGS sequence"/>
</dbReference>
<dbReference type="GO" id="GO:0005634">
    <property type="term" value="C:nucleus"/>
    <property type="evidence" value="ECO:0000318"/>
    <property type="project" value="GO_Central"/>
</dbReference>
<dbReference type="GO" id="GO:0000981">
    <property type="term" value="F:DNA-binding transcription factor activity, RNA polymerase II-specific"/>
    <property type="evidence" value="ECO:0000318"/>
    <property type="project" value="GO_Central"/>
</dbReference>
<dbReference type="GO" id="GO:0000977">
    <property type="term" value="F:RNA polymerase II transcription regulatory region sequence-specific DNA binding"/>
    <property type="evidence" value="ECO:0000318"/>
    <property type="project" value="GO_Central"/>
</dbReference>
<dbReference type="GO" id="GO:0008270">
    <property type="term" value="F:zinc ion binding"/>
    <property type="evidence" value="ECO:0007669"/>
    <property type="project" value="UniProtKB-KW"/>
</dbReference>
<dbReference type="GO" id="GO:0006357">
    <property type="term" value="P:regulation of transcription by RNA polymerase II"/>
    <property type="evidence" value="ECO:0000318"/>
    <property type="project" value="GO_Central"/>
</dbReference>
<dbReference type="CDD" id="cd07765">
    <property type="entry name" value="KRAB_A-box"/>
    <property type="match status" value="1"/>
</dbReference>
<dbReference type="FunFam" id="3.30.160.60:FF:002959">
    <property type="match status" value="4"/>
</dbReference>
<dbReference type="FunFam" id="3.30.160.60:FF:003464">
    <property type="match status" value="3"/>
</dbReference>
<dbReference type="FunFam" id="3.30.160.60:FF:002455">
    <property type="entry name" value="FI03704p"/>
    <property type="match status" value="1"/>
</dbReference>
<dbReference type="FunFam" id="3.30.160.60:FF:000446">
    <property type="entry name" value="Zinc finger protein"/>
    <property type="match status" value="1"/>
</dbReference>
<dbReference type="Gene3D" id="6.10.140.140">
    <property type="match status" value="1"/>
</dbReference>
<dbReference type="Gene3D" id="3.30.160.60">
    <property type="entry name" value="Classic Zinc Finger"/>
    <property type="match status" value="11"/>
</dbReference>
<dbReference type="InterPro" id="IPR001909">
    <property type="entry name" value="KRAB"/>
</dbReference>
<dbReference type="InterPro" id="IPR036051">
    <property type="entry name" value="KRAB_dom_sf"/>
</dbReference>
<dbReference type="InterPro" id="IPR036236">
    <property type="entry name" value="Znf_C2H2_sf"/>
</dbReference>
<dbReference type="InterPro" id="IPR013087">
    <property type="entry name" value="Znf_C2H2_type"/>
</dbReference>
<dbReference type="PANTHER" id="PTHR23226:SF416">
    <property type="entry name" value="FI01424P"/>
    <property type="match status" value="1"/>
</dbReference>
<dbReference type="PANTHER" id="PTHR23226">
    <property type="entry name" value="ZINC FINGER AND SCAN DOMAIN-CONTAINING"/>
    <property type="match status" value="1"/>
</dbReference>
<dbReference type="Pfam" id="PF01352">
    <property type="entry name" value="KRAB"/>
    <property type="match status" value="1"/>
</dbReference>
<dbReference type="Pfam" id="PF00096">
    <property type="entry name" value="zf-C2H2"/>
    <property type="match status" value="6"/>
</dbReference>
<dbReference type="Pfam" id="PF13465">
    <property type="entry name" value="zf-H2C2_2"/>
    <property type="match status" value="2"/>
</dbReference>
<dbReference type="SMART" id="SM00355">
    <property type="entry name" value="ZnF_C2H2"/>
    <property type="match status" value="11"/>
</dbReference>
<dbReference type="SUPFAM" id="SSF57667">
    <property type="entry name" value="beta-beta-alpha zinc fingers"/>
    <property type="match status" value="6"/>
</dbReference>
<dbReference type="SUPFAM" id="SSF109640">
    <property type="entry name" value="KRAB domain (Kruppel-associated box)"/>
    <property type="match status" value="1"/>
</dbReference>
<dbReference type="PROSITE" id="PS50805">
    <property type="entry name" value="KRAB"/>
    <property type="match status" value="1"/>
</dbReference>
<dbReference type="PROSITE" id="PS00028">
    <property type="entry name" value="ZINC_FINGER_C2H2_1"/>
    <property type="match status" value="11"/>
</dbReference>
<dbReference type="PROSITE" id="PS50157">
    <property type="entry name" value="ZINC_FINGER_C2H2_2"/>
    <property type="match status" value="11"/>
</dbReference>
<keyword id="KW-0238">DNA-binding</keyword>
<keyword id="KW-0479">Metal-binding</keyword>
<keyword id="KW-0539">Nucleus</keyword>
<keyword id="KW-1185">Reference proteome</keyword>
<keyword id="KW-0677">Repeat</keyword>
<keyword id="KW-0862">Zinc</keyword>
<keyword id="KW-0863">Zinc-finger</keyword>
<accession>P30373</accession>
<organism>
    <name type="scientific">Gallus gallus</name>
    <name type="common">Chicken</name>
    <dbReference type="NCBI Taxonomy" id="9031"/>
    <lineage>
        <taxon>Eukaryota</taxon>
        <taxon>Metazoa</taxon>
        <taxon>Chordata</taxon>
        <taxon>Craniata</taxon>
        <taxon>Vertebrata</taxon>
        <taxon>Euteleostomi</taxon>
        <taxon>Archelosauria</taxon>
        <taxon>Archosauria</taxon>
        <taxon>Dinosauria</taxon>
        <taxon>Saurischia</taxon>
        <taxon>Theropoda</taxon>
        <taxon>Coelurosauria</taxon>
        <taxon>Aves</taxon>
        <taxon>Neognathae</taxon>
        <taxon>Galloanserae</taxon>
        <taxon>Galliformes</taxon>
        <taxon>Phasianidae</taxon>
        <taxon>Phasianinae</taxon>
        <taxon>Gallus</taxon>
    </lineage>
</organism>
<sequence length="509" mass="56709">MEPYVLLDPRQKALYRDVMQESYETLMSIAQGLVNHKAAEEDAVGLKEDAVGSEEPQTHPPHNPAQNRTAGSHRRKAKRPDKAAPLGVAQTPPAAPTPKRDGVKPSRVRDRPFGCPDCGKSFPWASHLERHRRVHTGERPYSCPECGESYSQSSHLVQHRRTHGGDRPHKCQHCGKPFAGAAQLLAHSRGHAADRPHRCGDCGKGFVWASHLERHRRVHTGEKPYECPECGEAFSQGSHLTKHRRSHARSGRTAAPLRKCFGQSSDLVQHRSRAGKKPQRCAECGKAFRAAPPLRRHRRERSHRCGDCGKGFAWASHLQRHRRVHTGERPFPCGLCGERFSQKAHLLQHGKTHRPERPYKCGDCGKRFENAPPFLAHRRGHAALKSFTCGDCGKGFAWASHLQRHRRVHTGEKPYECPECGEAFSQGSHLTKHRRSHGPKAPLLPVQGRGEAGEPLRASPLSSGAEQRDGRRAQRGGVEEEVGWGANRAVLRGRSAHSWPRSHLPMLGC</sequence>
<proteinExistence type="evidence at transcript level"/>
<name>CKR1_CHICK</name>
<reference key="1">
    <citation type="journal article" date="1991" name="Gene">
        <title>Primary structure and expression of a chicken cDNA encoding a protein with zinc-finger motifs.</title>
        <authorList>
            <person name="Benn A."/>
            <person name="Antoine M."/>
            <person name="Beug H."/>
            <person name="Niessing J."/>
        </authorList>
    </citation>
    <scope>NUCLEOTIDE SEQUENCE [MRNA]</scope>
    <source>
        <tissue>Bone marrow</tissue>
    </source>
</reference>
<feature type="chain" id="PRO_0000047587" description="Zinc finger protein CKR1">
    <location>
        <begin position="1"/>
        <end position="509"/>
    </location>
</feature>
<feature type="domain" description="KRAB" evidence="2">
    <location>
        <begin position="1"/>
        <end position="61"/>
    </location>
</feature>
<feature type="zinc finger region" description="C2H2-type 1" evidence="1">
    <location>
        <begin position="113"/>
        <end position="135"/>
    </location>
</feature>
<feature type="zinc finger region" description="C2H2-type 2" evidence="1">
    <location>
        <begin position="141"/>
        <end position="163"/>
    </location>
</feature>
<feature type="zinc finger region" description="C2H2-type 3" evidence="1">
    <location>
        <begin position="169"/>
        <end position="191"/>
    </location>
</feature>
<feature type="zinc finger region" description="C2H2-type 4" evidence="1">
    <location>
        <begin position="197"/>
        <end position="219"/>
    </location>
</feature>
<feature type="zinc finger region" description="C2H2-type 5" evidence="1">
    <location>
        <begin position="225"/>
        <end position="247"/>
    </location>
</feature>
<feature type="zinc finger region" description="C2H2-type 6" evidence="1">
    <location>
        <begin position="279"/>
        <end position="303"/>
    </location>
</feature>
<feature type="zinc finger region" description="C2H2-type 7" evidence="1">
    <location>
        <begin position="303"/>
        <end position="325"/>
    </location>
</feature>
<feature type="zinc finger region" description="C2H2-type 8" evidence="1">
    <location>
        <begin position="331"/>
        <end position="353"/>
    </location>
</feature>
<feature type="zinc finger region" description="C2H2-type 9" evidence="1">
    <location>
        <begin position="359"/>
        <end position="383"/>
    </location>
</feature>
<feature type="zinc finger region" description="C2H2-type 10" evidence="1">
    <location>
        <begin position="387"/>
        <end position="409"/>
    </location>
</feature>
<feature type="zinc finger region" description="C2H2-type 11" evidence="1">
    <location>
        <begin position="415"/>
        <end position="437"/>
    </location>
</feature>
<feature type="region of interest" description="Disordered" evidence="3">
    <location>
        <begin position="41"/>
        <end position="114"/>
    </location>
</feature>
<feature type="region of interest" description="Disordered" evidence="3">
    <location>
        <begin position="428"/>
        <end position="479"/>
    </location>
</feature>
<feature type="compositionally biased region" description="Basic and acidic residues" evidence="3">
    <location>
        <begin position="41"/>
        <end position="50"/>
    </location>
</feature>
<feature type="compositionally biased region" description="Basic and acidic residues" evidence="3">
    <location>
        <begin position="98"/>
        <end position="112"/>
    </location>
</feature>
<comment type="subcellular location">
    <subcellularLocation>
        <location evidence="4">Nucleus</location>
    </subcellularLocation>
</comment>
<comment type="similarity">
    <text evidence="4">Belongs to the krueppel C2H2-type zinc-finger protein family.</text>
</comment>
<evidence type="ECO:0000255" key="1">
    <source>
        <dbReference type="PROSITE-ProRule" id="PRU00042"/>
    </source>
</evidence>
<evidence type="ECO:0000255" key="2">
    <source>
        <dbReference type="PROSITE-ProRule" id="PRU00119"/>
    </source>
</evidence>
<evidence type="ECO:0000256" key="3">
    <source>
        <dbReference type="SAM" id="MobiDB-lite"/>
    </source>
</evidence>
<evidence type="ECO:0000305" key="4"/>
<protein>
    <recommendedName>
        <fullName>Zinc finger protein CKR1</fullName>
    </recommendedName>
</protein>